<comment type="function">
    <text evidence="1">Carrier of the growing fatty acid chain in fatty acid biosynthesis.</text>
</comment>
<comment type="pathway">
    <text evidence="1">Lipid metabolism; fatty acid biosynthesis.</text>
</comment>
<comment type="subcellular location">
    <subcellularLocation>
        <location evidence="1">Cytoplasm</location>
    </subcellularLocation>
</comment>
<comment type="PTM">
    <text evidence="1">4'-phosphopantetheine is transferred from CoA to a specific serine of apo-ACP by AcpS. This modification is essential for activity because fatty acids are bound in thioester linkage to the sulfhydryl of the prosthetic group.</text>
</comment>
<comment type="similarity">
    <text evidence="1">Belongs to the acyl carrier protein (ACP) family.</text>
</comment>
<sequence length="78" mass="8640">MSTIEERVKKIIGEQLGVKQEEVTNNASFVEDLGADSLDTVELVMALEEEFDTEIPDEEAEKITTVQAAIDYINGHQA</sequence>
<gene>
    <name evidence="1" type="primary">acpP</name>
    <name type="ordered locus">ECIAI39_2067</name>
</gene>
<dbReference type="EMBL" id="CU928164">
    <property type="protein sequence ID" value="CAR18194.1"/>
    <property type="molecule type" value="Genomic_DNA"/>
</dbReference>
<dbReference type="RefSeq" id="WP_000103754.1">
    <property type="nucleotide sequence ID" value="NC_011750.1"/>
</dbReference>
<dbReference type="RefSeq" id="YP_002408032.1">
    <property type="nucleotide sequence ID" value="NC_011750.1"/>
</dbReference>
<dbReference type="SMR" id="B7NKI6"/>
<dbReference type="STRING" id="585057.ECIAI39_2067"/>
<dbReference type="GeneID" id="98387866"/>
<dbReference type="KEGG" id="ect:ECIAI39_2067"/>
<dbReference type="PATRIC" id="fig|585057.6.peg.2148"/>
<dbReference type="HOGENOM" id="CLU_108696_5_1_6"/>
<dbReference type="UniPathway" id="UPA00094"/>
<dbReference type="PRO" id="PR:B7NKI6"/>
<dbReference type="Proteomes" id="UP000000749">
    <property type="component" value="Chromosome"/>
</dbReference>
<dbReference type="GO" id="GO:0005829">
    <property type="term" value="C:cytosol"/>
    <property type="evidence" value="ECO:0007669"/>
    <property type="project" value="TreeGrafter"/>
</dbReference>
<dbReference type="GO" id="GO:0016020">
    <property type="term" value="C:membrane"/>
    <property type="evidence" value="ECO:0007669"/>
    <property type="project" value="GOC"/>
</dbReference>
<dbReference type="GO" id="GO:0000035">
    <property type="term" value="F:acyl binding"/>
    <property type="evidence" value="ECO:0007669"/>
    <property type="project" value="TreeGrafter"/>
</dbReference>
<dbReference type="GO" id="GO:0000036">
    <property type="term" value="F:acyl carrier activity"/>
    <property type="evidence" value="ECO:0007669"/>
    <property type="project" value="UniProtKB-UniRule"/>
</dbReference>
<dbReference type="GO" id="GO:0009245">
    <property type="term" value="P:lipid A biosynthetic process"/>
    <property type="evidence" value="ECO:0007669"/>
    <property type="project" value="TreeGrafter"/>
</dbReference>
<dbReference type="FunFam" id="1.10.1200.10:FF:000001">
    <property type="entry name" value="Acyl carrier protein"/>
    <property type="match status" value="1"/>
</dbReference>
<dbReference type="Gene3D" id="1.10.1200.10">
    <property type="entry name" value="ACP-like"/>
    <property type="match status" value="1"/>
</dbReference>
<dbReference type="HAMAP" id="MF_01217">
    <property type="entry name" value="Acyl_carrier"/>
    <property type="match status" value="1"/>
</dbReference>
<dbReference type="InterPro" id="IPR003231">
    <property type="entry name" value="ACP"/>
</dbReference>
<dbReference type="InterPro" id="IPR036736">
    <property type="entry name" value="ACP-like_sf"/>
</dbReference>
<dbReference type="InterPro" id="IPR009081">
    <property type="entry name" value="PP-bd_ACP"/>
</dbReference>
<dbReference type="InterPro" id="IPR006162">
    <property type="entry name" value="Ppantetheine_attach_site"/>
</dbReference>
<dbReference type="NCBIfam" id="TIGR00517">
    <property type="entry name" value="acyl_carrier"/>
    <property type="match status" value="1"/>
</dbReference>
<dbReference type="NCBIfam" id="NF002148">
    <property type="entry name" value="PRK00982.1-2"/>
    <property type="match status" value="1"/>
</dbReference>
<dbReference type="NCBIfam" id="NF002149">
    <property type="entry name" value="PRK00982.1-3"/>
    <property type="match status" value="1"/>
</dbReference>
<dbReference type="NCBIfam" id="NF002150">
    <property type="entry name" value="PRK00982.1-4"/>
    <property type="match status" value="1"/>
</dbReference>
<dbReference type="NCBIfam" id="NF002151">
    <property type="entry name" value="PRK00982.1-5"/>
    <property type="match status" value="1"/>
</dbReference>
<dbReference type="PANTHER" id="PTHR20863">
    <property type="entry name" value="ACYL CARRIER PROTEIN"/>
    <property type="match status" value="1"/>
</dbReference>
<dbReference type="PANTHER" id="PTHR20863:SF76">
    <property type="entry name" value="CARRIER DOMAIN-CONTAINING PROTEIN"/>
    <property type="match status" value="1"/>
</dbReference>
<dbReference type="Pfam" id="PF00550">
    <property type="entry name" value="PP-binding"/>
    <property type="match status" value="1"/>
</dbReference>
<dbReference type="SUPFAM" id="SSF47336">
    <property type="entry name" value="ACP-like"/>
    <property type="match status" value="1"/>
</dbReference>
<dbReference type="PROSITE" id="PS50075">
    <property type="entry name" value="CARRIER"/>
    <property type="match status" value="1"/>
</dbReference>
<dbReference type="PROSITE" id="PS00012">
    <property type="entry name" value="PHOSPHOPANTETHEINE"/>
    <property type="match status" value="1"/>
</dbReference>
<name>ACP_ECO7I</name>
<protein>
    <recommendedName>
        <fullName evidence="1">Acyl carrier protein</fullName>
        <shortName evidence="1">ACP</shortName>
    </recommendedName>
</protein>
<reference key="1">
    <citation type="journal article" date="2009" name="PLoS Genet.">
        <title>Organised genome dynamics in the Escherichia coli species results in highly diverse adaptive paths.</title>
        <authorList>
            <person name="Touchon M."/>
            <person name="Hoede C."/>
            <person name="Tenaillon O."/>
            <person name="Barbe V."/>
            <person name="Baeriswyl S."/>
            <person name="Bidet P."/>
            <person name="Bingen E."/>
            <person name="Bonacorsi S."/>
            <person name="Bouchier C."/>
            <person name="Bouvet O."/>
            <person name="Calteau A."/>
            <person name="Chiapello H."/>
            <person name="Clermont O."/>
            <person name="Cruveiller S."/>
            <person name="Danchin A."/>
            <person name="Diard M."/>
            <person name="Dossat C."/>
            <person name="Karoui M.E."/>
            <person name="Frapy E."/>
            <person name="Garry L."/>
            <person name="Ghigo J.M."/>
            <person name="Gilles A.M."/>
            <person name="Johnson J."/>
            <person name="Le Bouguenec C."/>
            <person name="Lescat M."/>
            <person name="Mangenot S."/>
            <person name="Martinez-Jehanne V."/>
            <person name="Matic I."/>
            <person name="Nassif X."/>
            <person name="Oztas S."/>
            <person name="Petit M.A."/>
            <person name="Pichon C."/>
            <person name="Rouy Z."/>
            <person name="Ruf C.S."/>
            <person name="Schneider D."/>
            <person name="Tourret J."/>
            <person name="Vacherie B."/>
            <person name="Vallenet D."/>
            <person name="Medigue C."/>
            <person name="Rocha E.P.C."/>
            <person name="Denamur E."/>
        </authorList>
    </citation>
    <scope>NUCLEOTIDE SEQUENCE [LARGE SCALE GENOMIC DNA]</scope>
    <source>
        <strain>IAI39 / ExPEC</strain>
    </source>
</reference>
<organism>
    <name type="scientific">Escherichia coli O7:K1 (strain IAI39 / ExPEC)</name>
    <dbReference type="NCBI Taxonomy" id="585057"/>
    <lineage>
        <taxon>Bacteria</taxon>
        <taxon>Pseudomonadati</taxon>
        <taxon>Pseudomonadota</taxon>
        <taxon>Gammaproteobacteria</taxon>
        <taxon>Enterobacterales</taxon>
        <taxon>Enterobacteriaceae</taxon>
        <taxon>Escherichia</taxon>
    </lineage>
</organism>
<proteinExistence type="inferred from homology"/>
<feature type="chain" id="PRO_1000139022" description="Acyl carrier protein">
    <location>
        <begin position="1"/>
        <end position="78"/>
    </location>
</feature>
<feature type="domain" description="Carrier" evidence="2">
    <location>
        <begin position="2"/>
        <end position="77"/>
    </location>
</feature>
<feature type="modified residue" description="O-(pantetheine 4'-phosphoryl)serine" evidence="2">
    <location>
        <position position="37"/>
    </location>
</feature>
<accession>B7NKI6</accession>
<evidence type="ECO:0000255" key="1">
    <source>
        <dbReference type="HAMAP-Rule" id="MF_01217"/>
    </source>
</evidence>
<evidence type="ECO:0000255" key="2">
    <source>
        <dbReference type="PROSITE-ProRule" id="PRU00258"/>
    </source>
</evidence>
<keyword id="KW-0963">Cytoplasm</keyword>
<keyword id="KW-0275">Fatty acid biosynthesis</keyword>
<keyword id="KW-0276">Fatty acid metabolism</keyword>
<keyword id="KW-0444">Lipid biosynthesis</keyword>
<keyword id="KW-0443">Lipid metabolism</keyword>
<keyword id="KW-0596">Phosphopantetheine</keyword>
<keyword id="KW-0597">Phosphoprotein</keyword>